<protein>
    <recommendedName>
        <fullName evidence="3">Type II methyltransferase M.DsaV</fullName>
        <shortName evidence="4">M.DsaV</shortName>
        <ecNumber>2.1.1.37</ecNumber>
    </recommendedName>
    <alternativeName>
        <fullName>Cytosine-specific methyltransferase DsaV</fullName>
    </alternativeName>
    <alternativeName>
        <fullName>Modification methylase DsaV</fullName>
    </alternativeName>
</protein>
<feature type="chain" id="PRO_0000087872" description="Type II methyltransferase M.DsaV">
    <location>
        <begin position="1"/>
        <end position="351"/>
    </location>
</feature>
<feature type="domain" description="SAM-dependent MTase C5-type" evidence="1">
    <location>
        <begin position="6"/>
        <end position="312"/>
    </location>
</feature>
<feature type="active site" evidence="1 2">
    <location>
        <position position="75"/>
    </location>
</feature>
<name>MTD5_DACSA</name>
<accession>P50185</accession>
<organism>
    <name type="scientific">Dactylococcopsis salina</name>
    <name type="common">Myxobaktron salinum</name>
    <dbReference type="NCBI Taxonomy" id="292566"/>
    <lineage>
        <taxon>Bacteria</taxon>
        <taxon>Bacillati</taxon>
        <taxon>Cyanobacteriota</taxon>
        <taxon>Cyanophyceae</taxon>
        <taxon>Synechococcales</taxon>
        <taxon>Synechococcaceae</taxon>
        <taxon>Dactylococcopsis</taxon>
    </lineage>
</organism>
<evidence type="ECO:0000255" key="1">
    <source>
        <dbReference type="PROSITE-ProRule" id="PRU01016"/>
    </source>
</evidence>
<evidence type="ECO:0000255" key="2">
    <source>
        <dbReference type="PROSITE-ProRule" id="PRU10018"/>
    </source>
</evidence>
<evidence type="ECO:0000303" key="3">
    <source>
    </source>
</evidence>
<evidence type="ECO:0000303" key="4">
    <source>
    </source>
</evidence>
<evidence type="ECO:0000305" key="5">
    <source>
    </source>
</evidence>
<sequence length="351" mass="40499">MEKKQLKFIDLFAGIGGMRIPFEELGGKCVFSSEIDKHCQRTYEANFGEMPTGDITKLSADSIPYHDLLLAGFPCQAFSQGGRKQGFQDERGQLFFQVAKILNDHRPQAILLENVKGLRGHDKGRTLQMILYVLEKLNYVVSWKIISATDFNLPQKRERIFIVGFQDKNNKNLIFDFPKPIELTAKVGDLLEKEVDEKYTITDRMWEGHQNRKKAHRKRGNGFGFSLVNRNSSYTRTISARYYKDGSEVLVEQANKNPRVLTPRECARLQGFPESFVIPVSDCQAWRQFGNSVPVSVIRAIAQKMLSYIDLTEQQKEFKKVDLDQVITQKKKQLYPEDYQEQFIQKELALL</sequence>
<reference key="1">
    <citation type="journal article" date="1994" name="Nucleic Acids Res.">
        <title>DsaV methyltransferase and its isoschizomers contain a conserved segment that is similar to the segment in Hhai methyltransferase that is in contact with DNA bases.</title>
        <authorList>
            <person name="Gopal J."/>
            <person name="Yebra M.J."/>
            <person name="Bhagwat A.S."/>
        </authorList>
    </citation>
    <scope>NUCLEOTIDE SEQUENCE [GENOMIC DNA]</scope>
    <scope>FUNCTION</scope>
    <source>
        <strain>DSM 4880</strain>
    </source>
</reference>
<reference key="2">
    <citation type="journal article" date="2003" name="Nucleic Acids Res.">
        <title>A nomenclature for restriction enzymes, DNA methyltransferases, homing endonucleases and their genes.</title>
        <authorList>
            <person name="Roberts R.J."/>
            <person name="Belfort M."/>
            <person name="Bestor T."/>
            <person name="Bhagwat A.S."/>
            <person name="Bickle T.A."/>
            <person name="Bitinaite J."/>
            <person name="Blumenthal R.M."/>
            <person name="Degtyarev S.K."/>
            <person name="Dryden D.T."/>
            <person name="Dybvig K."/>
            <person name="Firman K."/>
            <person name="Gromova E.S."/>
            <person name="Gumport R.I."/>
            <person name="Halford S.E."/>
            <person name="Hattman S."/>
            <person name="Heitman J."/>
            <person name="Hornby D.P."/>
            <person name="Janulaitis A."/>
            <person name="Jeltsch A."/>
            <person name="Josephsen J."/>
            <person name="Kiss A."/>
            <person name="Klaenhammer T.R."/>
            <person name="Kobayashi I."/>
            <person name="Kong H."/>
            <person name="Krueger D.H."/>
            <person name="Lacks S."/>
            <person name="Marinus M.G."/>
            <person name="Miyahara M."/>
            <person name="Morgan R.D."/>
            <person name="Murray N.E."/>
            <person name="Nagaraja V."/>
            <person name="Piekarowicz A."/>
            <person name="Pingoud A."/>
            <person name="Raleigh E."/>
            <person name="Rao D.N."/>
            <person name="Reich N."/>
            <person name="Repin V.E."/>
            <person name="Selker E.U."/>
            <person name="Shaw P.C."/>
            <person name="Stein D.C."/>
            <person name="Stoddard B.L."/>
            <person name="Szybalski W."/>
            <person name="Trautner T.A."/>
            <person name="Van Etten J.L."/>
            <person name="Vitor J.M."/>
            <person name="Wilson G.G."/>
            <person name="Xu S.Y."/>
        </authorList>
    </citation>
    <scope>NOMENCLATURE</scope>
</reference>
<proteinExistence type="inferred from homology"/>
<comment type="function">
    <text evidence="3 5">A methylase, recognizes the double-stranded sequence 5'-CCNGG-3', methylates C-2 on both strands, and protects the DNA from cleavage by the DsaV endonuclease.</text>
</comment>
<comment type="catalytic activity">
    <reaction evidence="2">
        <text>a 2'-deoxycytidine in DNA + S-adenosyl-L-methionine = a 5-methyl-2'-deoxycytidine in DNA + S-adenosyl-L-homocysteine + H(+)</text>
        <dbReference type="Rhea" id="RHEA:13681"/>
        <dbReference type="Rhea" id="RHEA-COMP:11369"/>
        <dbReference type="Rhea" id="RHEA-COMP:11370"/>
        <dbReference type="ChEBI" id="CHEBI:15378"/>
        <dbReference type="ChEBI" id="CHEBI:57856"/>
        <dbReference type="ChEBI" id="CHEBI:59789"/>
        <dbReference type="ChEBI" id="CHEBI:85452"/>
        <dbReference type="ChEBI" id="CHEBI:85454"/>
        <dbReference type="EC" id="2.1.1.37"/>
    </reaction>
</comment>
<comment type="similarity">
    <text evidence="1">Belongs to the class I-like SAM-binding methyltransferase superfamily. C5-methyltransferase family.</text>
</comment>
<dbReference type="EC" id="2.1.1.37"/>
<dbReference type="EMBL" id="U10528">
    <property type="protein sequence ID" value="AAA86046.1"/>
    <property type="molecule type" value="Genomic_DNA"/>
</dbReference>
<dbReference type="PIR" id="S50098">
    <property type="entry name" value="S50098"/>
</dbReference>
<dbReference type="SMR" id="P50185"/>
<dbReference type="REBASE" id="3361">
    <property type="entry name" value="M.DsaV"/>
</dbReference>
<dbReference type="PRO" id="PR:P50185"/>
<dbReference type="GO" id="GO:0003886">
    <property type="term" value="F:DNA (cytosine-5-)-methyltransferase activity"/>
    <property type="evidence" value="ECO:0007669"/>
    <property type="project" value="UniProtKB-EC"/>
</dbReference>
<dbReference type="GO" id="GO:0003677">
    <property type="term" value="F:DNA binding"/>
    <property type="evidence" value="ECO:0007669"/>
    <property type="project" value="UniProtKB-KW"/>
</dbReference>
<dbReference type="GO" id="GO:0009307">
    <property type="term" value="P:DNA restriction-modification system"/>
    <property type="evidence" value="ECO:0007669"/>
    <property type="project" value="UniProtKB-KW"/>
</dbReference>
<dbReference type="GO" id="GO:0032259">
    <property type="term" value="P:methylation"/>
    <property type="evidence" value="ECO:0007669"/>
    <property type="project" value="UniProtKB-KW"/>
</dbReference>
<dbReference type="CDD" id="cd00315">
    <property type="entry name" value="Cyt_C5_DNA_methylase"/>
    <property type="match status" value="1"/>
</dbReference>
<dbReference type="Gene3D" id="3.90.120.30">
    <property type="match status" value="1"/>
</dbReference>
<dbReference type="Gene3D" id="3.40.50.150">
    <property type="entry name" value="Vaccinia Virus protein VP39"/>
    <property type="match status" value="1"/>
</dbReference>
<dbReference type="InterPro" id="IPR050750">
    <property type="entry name" value="C5-MTase"/>
</dbReference>
<dbReference type="InterPro" id="IPR018117">
    <property type="entry name" value="C5_DNA_meth_AS"/>
</dbReference>
<dbReference type="InterPro" id="IPR001525">
    <property type="entry name" value="C5_MeTfrase"/>
</dbReference>
<dbReference type="InterPro" id="IPR031303">
    <property type="entry name" value="C5_meth_CS"/>
</dbReference>
<dbReference type="InterPro" id="IPR029063">
    <property type="entry name" value="SAM-dependent_MTases_sf"/>
</dbReference>
<dbReference type="NCBIfam" id="TIGR00675">
    <property type="entry name" value="dcm"/>
    <property type="match status" value="1"/>
</dbReference>
<dbReference type="PANTHER" id="PTHR46098">
    <property type="entry name" value="TRNA (CYTOSINE(38)-C(5))-METHYLTRANSFERASE"/>
    <property type="match status" value="1"/>
</dbReference>
<dbReference type="PANTHER" id="PTHR46098:SF1">
    <property type="entry name" value="TRNA (CYTOSINE(38)-C(5))-METHYLTRANSFERASE"/>
    <property type="match status" value="1"/>
</dbReference>
<dbReference type="Pfam" id="PF00145">
    <property type="entry name" value="DNA_methylase"/>
    <property type="match status" value="1"/>
</dbReference>
<dbReference type="PRINTS" id="PR00105">
    <property type="entry name" value="C5METTRFRASE"/>
</dbReference>
<dbReference type="SUPFAM" id="SSF53335">
    <property type="entry name" value="S-adenosyl-L-methionine-dependent methyltransferases"/>
    <property type="match status" value="1"/>
</dbReference>
<dbReference type="PROSITE" id="PS00094">
    <property type="entry name" value="C5_MTASE_1"/>
    <property type="match status" value="1"/>
</dbReference>
<dbReference type="PROSITE" id="PS00095">
    <property type="entry name" value="C5_MTASE_2"/>
    <property type="match status" value="1"/>
</dbReference>
<dbReference type="PROSITE" id="PS51679">
    <property type="entry name" value="SAM_MT_C5"/>
    <property type="match status" value="1"/>
</dbReference>
<keyword id="KW-0238">DNA-binding</keyword>
<keyword id="KW-0489">Methyltransferase</keyword>
<keyword id="KW-0680">Restriction system</keyword>
<keyword id="KW-0949">S-adenosyl-L-methionine</keyword>
<keyword id="KW-0808">Transferase</keyword>
<gene>
    <name evidence="4" type="primary">dsaVm</name>
</gene>